<name>YQCI_BACSU</name>
<protein>
    <recommendedName>
        <fullName>Uncharacterized protein YqcI</fullName>
    </recommendedName>
</protein>
<organism>
    <name type="scientific">Bacillus subtilis (strain 168)</name>
    <dbReference type="NCBI Taxonomy" id="224308"/>
    <lineage>
        <taxon>Bacteria</taxon>
        <taxon>Bacillati</taxon>
        <taxon>Bacillota</taxon>
        <taxon>Bacilli</taxon>
        <taxon>Bacillales</taxon>
        <taxon>Bacillaceae</taxon>
        <taxon>Bacillus</taxon>
    </lineage>
</organism>
<dbReference type="EMBL" id="D32216">
    <property type="protein sequence ID" value="BAA06966.1"/>
    <property type="molecule type" value="Genomic_DNA"/>
</dbReference>
<dbReference type="EMBL" id="D84432">
    <property type="protein sequence ID" value="BAA12430.1"/>
    <property type="molecule type" value="Genomic_DNA"/>
</dbReference>
<dbReference type="EMBL" id="AL009126">
    <property type="protein sequence ID" value="CAB14523.2"/>
    <property type="molecule type" value="Genomic_DNA"/>
</dbReference>
<dbReference type="PIR" id="G69949">
    <property type="entry name" value="G69949"/>
</dbReference>
<dbReference type="RefSeq" id="NP_390459.2">
    <property type="nucleotide sequence ID" value="NC_000964.3"/>
</dbReference>
<dbReference type="RefSeq" id="WP_004398670.1">
    <property type="nucleotide sequence ID" value="NZ_OZ025638.1"/>
</dbReference>
<dbReference type="FunCoup" id="P45944">
    <property type="interactions" value="46"/>
</dbReference>
<dbReference type="STRING" id="224308.BSU25820"/>
<dbReference type="PaxDb" id="224308-BSU25820"/>
<dbReference type="EnsemblBacteria" id="CAB14523">
    <property type="protein sequence ID" value="CAB14523"/>
    <property type="gene ID" value="BSU_25820"/>
</dbReference>
<dbReference type="GeneID" id="937795"/>
<dbReference type="KEGG" id="bsu:BSU25820"/>
<dbReference type="PATRIC" id="fig|224308.43.peg.2693"/>
<dbReference type="eggNOG" id="COG3403">
    <property type="taxonomic scope" value="Bacteria"/>
</dbReference>
<dbReference type="InParanoid" id="P45944"/>
<dbReference type="OrthoDB" id="112290at2"/>
<dbReference type="PhylomeDB" id="P45944"/>
<dbReference type="BioCyc" id="BSUB:BSU25820-MONOMER"/>
<dbReference type="Proteomes" id="UP000001570">
    <property type="component" value="Chromosome"/>
</dbReference>
<dbReference type="InterPro" id="IPR014988">
    <property type="entry name" value="Uncharacterised_YqcI/YcgG"/>
</dbReference>
<dbReference type="PANTHER" id="PTHR40045">
    <property type="entry name" value="YCGG FAMILY PROTEIN"/>
    <property type="match status" value="1"/>
</dbReference>
<dbReference type="PANTHER" id="PTHR40045:SF1">
    <property type="entry name" value="YQCI_YCGG FAMILY PROTEIN"/>
    <property type="match status" value="1"/>
</dbReference>
<dbReference type="Pfam" id="PF08892">
    <property type="entry name" value="YqcI_YcgG"/>
    <property type="match status" value="1"/>
</dbReference>
<comment type="similarity">
    <text evidence="1">Belongs to the DcsA family.</text>
</comment>
<accession>P45944</accession>
<gene>
    <name type="primary">yqcI</name>
    <name type="ordered locus">BSU25820</name>
</gene>
<evidence type="ECO:0000305" key="1"/>
<reference key="1">
    <citation type="journal article" date="1995" name="Microbiology">
        <title>Complete nucleotide sequence of a skin element excised by DNA rearrangement during sporulation in Bacillus subtilis.</title>
        <authorList>
            <person name="Takemaru K."/>
            <person name="Mizuno M."/>
            <person name="Sato T."/>
            <person name="Takeuchi M."/>
            <person name="Kobayashi Y."/>
        </authorList>
    </citation>
    <scope>NUCLEOTIDE SEQUENCE [GENOMIC DNA]</scope>
    <source>
        <strain>168 / JH642</strain>
    </source>
</reference>
<reference key="2">
    <citation type="journal article" date="1996" name="Microbiology">
        <title>Systematic sequencing of the 283 kb 210 degrees-232 degrees region of the Bacillus subtilis genome containing the skin element and many sporulation genes.</title>
        <authorList>
            <person name="Mizuno M."/>
            <person name="Masuda S."/>
            <person name="Takemaru K."/>
            <person name="Hosono S."/>
            <person name="Sato T."/>
            <person name="Takeuchi M."/>
            <person name="Kobayashi Y."/>
        </authorList>
    </citation>
    <scope>NUCLEOTIDE SEQUENCE [GENOMIC DNA]</scope>
    <source>
        <strain>168 / JH642</strain>
    </source>
</reference>
<reference key="3">
    <citation type="journal article" date="1997" name="Nature">
        <title>The complete genome sequence of the Gram-positive bacterium Bacillus subtilis.</title>
        <authorList>
            <person name="Kunst F."/>
            <person name="Ogasawara N."/>
            <person name="Moszer I."/>
            <person name="Albertini A.M."/>
            <person name="Alloni G."/>
            <person name="Azevedo V."/>
            <person name="Bertero M.G."/>
            <person name="Bessieres P."/>
            <person name="Bolotin A."/>
            <person name="Borchert S."/>
            <person name="Borriss R."/>
            <person name="Boursier L."/>
            <person name="Brans A."/>
            <person name="Braun M."/>
            <person name="Brignell S.C."/>
            <person name="Bron S."/>
            <person name="Brouillet S."/>
            <person name="Bruschi C.V."/>
            <person name="Caldwell B."/>
            <person name="Capuano V."/>
            <person name="Carter N.M."/>
            <person name="Choi S.-K."/>
            <person name="Codani J.-J."/>
            <person name="Connerton I.F."/>
            <person name="Cummings N.J."/>
            <person name="Daniel R.A."/>
            <person name="Denizot F."/>
            <person name="Devine K.M."/>
            <person name="Duesterhoeft A."/>
            <person name="Ehrlich S.D."/>
            <person name="Emmerson P.T."/>
            <person name="Entian K.-D."/>
            <person name="Errington J."/>
            <person name="Fabret C."/>
            <person name="Ferrari E."/>
            <person name="Foulger D."/>
            <person name="Fritz C."/>
            <person name="Fujita M."/>
            <person name="Fujita Y."/>
            <person name="Fuma S."/>
            <person name="Galizzi A."/>
            <person name="Galleron N."/>
            <person name="Ghim S.-Y."/>
            <person name="Glaser P."/>
            <person name="Goffeau A."/>
            <person name="Golightly E.J."/>
            <person name="Grandi G."/>
            <person name="Guiseppi G."/>
            <person name="Guy B.J."/>
            <person name="Haga K."/>
            <person name="Haiech J."/>
            <person name="Harwood C.R."/>
            <person name="Henaut A."/>
            <person name="Hilbert H."/>
            <person name="Holsappel S."/>
            <person name="Hosono S."/>
            <person name="Hullo M.-F."/>
            <person name="Itaya M."/>
            <person name="Jones L.-M."/>
            <person name="Joris B."/>
            <person name="Karamata D."/>
            <person name="Kasahara Y."/>
            <person name="Klaerr-Blanchard M."/>
            <person name="Klein C."/>
            <person name="Kobayashi Y."/>
            <person name="Koetter P."/>
            <person name="Koningstein G."/>
            <person name="Krogh S."/>
            <person name="Kumano M."/>
            <person name="Kurita K."/>
            <person name="Lapidus A."/>
            <person name="Lardinois S."/>
            <person name="Lauber J."/>
            <person name="Lazarevic V."/>
            <person name="Lee S.-M."/>
            <person name="Levine A."/>
            <person name="Liu H."/>
            <person name="Masuda S."/>
            <person name="Mauel C."/>
            <person name="Medigue C."/>
            <person name="Medina N."/>
            <person name="Mellado R.P."/>
            <person name="Mizuno M."/>
            <person name="Moestl D."/>
            <person name="Nakai S."/>
            <person name="Noback M."/>
            <person name="Noone D."/>
            <person name="O'Reilly M."/>
            <person name="Ogawa K."/>
            <person name="Ogiwara A."/>
            <person name="Oudega B."/>
            <person name="Park S.-H."/>
            <person name="Parro V."/>
            <person name="Pohl T.M."/>
            <person name="Portetelle D."/>
            <person name="Porwollik S."/>
            <person name="Prescott A.M."/>
            <person name="Presecan E."/>
            <person name="Pujic P."/>
            <person name="Purnelle B."/>
            <person name="Rapoport G."/>
            <person name="Rey M."/>
            <person name="Reynolds S."/>
            <person name="Rieger M."/>
            <person name="Rivolta C."/>
            <person name="Rocha E."/>
            <person name="Roche B."/>
            <person name="Rose M."/>
            <person name="Sadaie Y."/>
            <person name="Sato T."/>
            <person name="Scanlan E."/>
            <person name="Schleich S."/>
            <person name="Schroeter R."/>
            <person name="Scoffone F."/>
            <person name="Sekiguchi J."/>
            <person name="Sekowska A."/>
            <person name="Seror S.J."/>
            <person name="Serror P."/>
            <person name="Shin B.-S."/>
            <person name="Soldo B."/>
            <person name="Sorokin A."/>
            <person name="Tacconi E."/>
            <person name="Takagi T."/>
            <person name="Takahashi H."/>
            <person name="Takemaru K."/>
            <person name="Takeuchi M."/>
            <person name="Tamakoshi A."/>
            <person name="Tanaka T."/>
            <person name="Terpstra P."/>
            <person name="Tognoni A."/>
            <person name="Tosato V."/>
            <person name="Uchiyama S."/>
            <person name="Vandenbol M."/>
            <person name="Vannier F."/>
            <person name="Vassarotti A."/>
            <person name="Viari A."/>
            <person name="Wambutt R."/>
            <person name="Wedler E."/>
            <person name="Wedler H."/>
            <person name="Weitzenegger T."/>
            <person name="Winters P."/>
            <person name="Wipat A."/>
            <person name="Yamamoto H."/>
            <person name="Yamane K."/>
            <person name="Yasumoto K."/>
            <person name="Yata K."/>
            <person name="Yoshida K."/>
            <person name="Yoshikawa H.-F."/>
            <person name="Zumstein E."/>
            <person name="Yoshikawa H."/>
            <person name="Danchin A."/>
        </authorList>
    </citation>
    <scope>NUCLEOTIDE SEQUENCE [LARGE SCALE GENOMIC DNA]</scope>
    <source>
        <strain>168</strain>
    </source>
</reference>
<reference key="4">
    <citation type="journal article" date="2009" name="Microbiology">
        <title>From a consortium sequence to a unified sequence: the Bacillus subtilis 168 reference genome a decade later.</title>
        <authorList>
            <person name="Barbe V."/>
            <person name="Cruveiller S."/>
            <person name="Kunst F."/>
            <person name="Lenoble P."/>
            <person name="Meurice G."/>
            <person name="Sekowska A."/>
            <person name="Vallenet D."/>
            <person name="Wang T."/>
            <person name="Moszer I."/>
            <person name="Medigue C."/>
            <person name="Danchin A."/>
        </authorList>
    </citation>
    <scope>SEQUENCE REVISION TO 251</scope>
</reference>
<reference key="5">
    <citation type="journal article" date="1995" name="Gene">
        <title>Analysis of a Bacillus subtilis genome fragment using a co-operative computer system prototype.</title>
        <authorList>
            <person name="Medigue C."/>
            <person name="Moszer I."/>
            <person name="Viari A."/>
            <person name="Danchin A."/>
        </authorList>
    </citation>
    <scope>IDENTIFICATION</scope>
</reference>
<feature type="chain" id="PRO_0000049778" description="Uncharacterized protein YqcI">
    <location>
        <begin position="1"/>
        <end position="254"/>
    </location>
</feature>
<feature type="sequence conflict" description="In Ref. 1; BAA06966 and 2; BAA12430." evidence="1" ref="1 2">
    <original>K</original>
    <variation>E</variation>
    <location>
        <position position="251"/>
    </location>
</feature>
<proteinExistence type="inferred from homology"/>
<sequence length="254" mass="30104">MTELYAKSDLEKIKETLPGWQLDSFNYLNEKIGDKENKFPCIPGRQAFLSDQLRIAFVGDPRNPETAKELAPLLTRYGTISRETGKYASLTVIFHTPEELLTDYKIEDYESLFWQLLNSLSMEDPADWPDDIPENPDNFQWEYCFNGEPYFVLCATPAHSKRKSRSFPYFMLTFQPRWVFEDLNDTTAFGRNMSKQIRKRLEAYDEVPIHPHLGWYGKKDNLEWKQYFLRDDENQVSQCPFMKMKNLFKKKRSD</sequence>
<keyword id="KW-1185">Reference proteome</keyword>